<name>YCF3_PICP2</name>
<evidence type="ECO:0000255" key="1">
    <source>
        <dbReference type="HAMAP-Rule" id="MF_00439"/>
    </source>
</evidence>
<sequence>MPRTQRNDNFIDKSFTVMADIILKILPTNNRSKEAFAYYRDGMSAQADGEYSEALENYEEALRLEDDPNDRSYILYNMGLIYASNGDHHKALELYHEAIDLNPRMPQALNNIAVVYHYQGEKAKQSGNEDESEALFDKAAEYWKQAIRIAPNNYIEAQNWLKTTGRSEMDVFF</sequence>
<feature type="chain" id="PRO_1000200326" description="Photosystem I assembly protein Ycf3">
    <location>
        <begin position="1"/>
        <end position="173"/>
    </location>
</feature>
<feature type="repeat" description="TPR 1">
    <location>
        <begin position="35"/>
        <end position="68"/>
    </location>
</feature>
<feature type="repeat" description="TPR 2">
    <location>
        <begin position="72"/>
        <end position="105"/>
    </location>
</feature>
<feature type="repeat" description="TPR 3">
    <location>
        <begin position="120"/>
        <end position="153"/>
    </location>
</feature>
<proteinExistence type="inferred from homology"/>
<organism>
    <name type="scientific">Picosynechococcus sp. (strain ATCC 27264 / PCC 7002 / PR-6)</name>
    <name type="common">Agmenellum quadruplicatum</name>
    <dbReference type="NCBI Taxonomy" id="32049"/>
    <lineage>
        <taxon>Bacteria</taxon>
        <taxon>Bacillati</taxon>
        <taxon>Cyanobacteriota</taxon>
        <taxon>Cyanophyceae</taxon>
        <taxon>Oscillatoriophycideae</taxon>
        <taxon>Chroococcales</taxon>
        <taxon>Geminocystaceae</taxon>
        <taxon>Picosynechococcus</taxon>
    </lineage>
</organism>
<gene>
    <name evidence="1" type="primary">ycf3</name>
    <name type="ordered locus">SYNPCC7002_A1566</name>
</gene>
<reference key="1">
    <citation type="submission" date="2008-02" db="EMBL/GenBank/DDBJ databases">
        <title>Complete sequence of Synechococcus sp. PCC 7002.</title>
        <authorList>
            <person name="Li T."/>
            <person name="Zhao J."/>
            <person name="Zhao C."/>
            <person name="Liu Z."/>
            <person name="Zhao F."/>
            <person name="Marquardt J."/>
            <person name="Nomura C.T."/>
            <person name="Persson S."/>
            <person name="Detter J.C."/>
            <person name="Richardson P.M."/>
            <person name="Lanz C."/>
            <person name="Schuster S.C."/>
            <person name="Wang J."/>
            <person name="Li S."/>
            <person name="Huang X."/>
            <person name="Cai T."/>
            <person name="Yu Z."/>
            <person name="Luo J."/>
            <person name="Zhao J."/>
            <person name="Bryant D.A."/>
        </authorList>
    </citation>
    <scope>NUCLEOTIDE SEQUENCE [LARGE SCALE GENOMIC DNA]</scope>
    <source>
        <strain>ATCC 27264 / PCC 7002 / PR-6</strain>
    </source>
</reference>
<keyword id="KW-0472">Membrane</keyword>
<keyword id="KW-0602">Photosynthesis</keyword>
<keyword id="KW-1185">Reference proteome</keyword>
<keyword id="KW-0677">Repeat</keyword>
<keyword id="KW-0793">Thylakoid</keyword>
<keyword id="KW-0802">TPR repeat</keyword>
<accession>B1XNN2</accession>
<protein>
    <recommendedName>
        <fullName evidence="1">Photosystem I assembly protein Ycf3</fullName>
    </recommendedName>
</protein>
<comment type="function">
    <text evidence="1">Essential for the assembly of the photosystem I (PSI) complex. May act as a chaperone-like factor to guide the assembly of the PSI subunits.</text>
</comment>
<comment type="subcellular location">
    <subcellularLocation>
        <location evidence="1">Cellular thylakoid membrane</location>
        <topology evidence="1">Peripheral membrane protein</topology>
    </subcellularLocation>
</comment>
<comment type="similarity">
    <text evidence="1">Belongs to the Ycf3 family.</text>
</comment>
<dbReference type="EMBL" id="CP000951">
    <property type="protein sequence ID" value="ACA99557.1"/>
    <property type="molecule type" value="Genomic_DNA"/>
</dbReference>
<dbReference type="RefSeq" id="WP_012307180.1">
    <property type="nucleotide sequence ID" value="NZ_JAHHPU010000002.1"/>
</dbReference>
<dbReference type="SMR" id="B1XNN2"/>
<dbReference type="STRING" id="32049.SYNPCC7002_A1566"/>
<dbReference type="KEGG" id="syp:SYNPCC7002_A1566"/>
<dbReference type="eggNOG" id="COG0457">
    <property type="taxonomic scope" value="Bacteria"/>
</dbReference>
<dbReference type="HOGENOM" id="CLU_141248_0_0_3"/>
<dbReference type="Proteomes" id="UP000001688">
    <property type="component" value="Chromosome"/>
</dbReference>
<dbReference type="GO" id="GO:0031676">
    <property type="term" value="C:plasma membrane-derived thylakoid membrane"/>
    <property type="evidence" value="ECO:0007669"/>
    <property type="project" value="UniProtKB-SubCell"/>
</dbReference>
<dbReference type="GO" id="GO:0015979">
    <property type="term" value="P:photosynthesis"/>
    <property type="evidence" value="ECO:0007669"/>
    <property type="project" value="UniProtKB-UniRule"/>
</dbReference>
<dbReference type="Gene3D" id="1.25.40.10">
    <property type="entry name" value="Tetratricopeptide repeat domain"/>
    <property type="match status" value="1"/>
</dbReference>
<dbReference type="HAMAP" id="MF_00439">
    <property type="entry name" value="Ycf3"/>
    <property type="match status" value="1"/>
</dbReference>
<dbReference type="InterPro" id="IPR022818">
    <property type="entry name" value="PSI_Ycf3_assembly"/>
</dbReference>
<dbReference type="InterPro" id="IPR011990">
    <property type="entry name" value="TPR-like_helical_dom_sf"/>
</dbReference>
<dbReference type="InterPro" id="IPR019734">
    <property type="entry name" value="TPR_rpt"/>
</dbReference>
<dbReference type="InterPro" id="IPR051685">
    <property type="entry name" value="Ycf3/AcsC/BcsC/TPR_MFPF"/>
</dbReference>
<dbReference type="NCBIfam" id="NF002725">
    <property type="entry name" value="PRK02603.1"/>
    <property type="match status" value="1"/>
</dbReference>
<dbReference type="PANTHER" id="PTHR44943">
    <property type="entry name" value="CELLULOSE SYNTHASE OPERON PROTEIN C"/>
    <property type="match status" value="1"/>
</dbReference>
<dbReference type="PANTHER" id="PTHR44943:SF8">
    <property type="entry name" value="TPR REPEAT-CONTAINING PROTEIN MJ0263"/>
    <property type="match status" value="1"/>
</dbReference>
<dbReference type="Pfam" id="PF00515">
    <property type="entry name" value="TPR_1"/>
    <property type="match status" value="1"/>
</dbReference>
<dbReference type="Pfam" id="PF13176">
    <property type="entry name" value="TPR_7"/>
    <property type="match status" value="1"/>
</dbReference>
<dbReference type="SMART" id="SM00028">
    <property type="entry name" value="TPR"/>
    <property type="match status" value="3"/>
</dbReference>
<dbReference type="SUPFAM" id="SSF48452">
    <property type="entry name" value="TPR-like"/>
    <property type="match status" value="1"/>
</dbReference>
<dbReference type="PROSITE" id="PS50005">
    <property type="entry name" value="TPR"/>
    <property type="match status" value="3"/>
</dbReference>
<dbReference type="PROSITE" id="PS50293">
    <property type="entry name" value="TPR_REGION"/>
    <property type="match status" value="1"/>
</dbReference>